<accession>C5D636</accession>
<name>RL20_GEOSW</name>
<dbReference type="EMBL" id="CP001638">
    <property type="protein sequence ID" value="ACS25352.1"/>
    <property type="molecule type" value="Genomic_DNA"/>
</dbReference>
<dbReference type="SMR" id="C5D636"/>
<dbReference type="STRING" id="471223.GWCH70_2658"/>
<dbReference type="KEGG" id="gwc:GWCH70_2658"/>
<dbReference type="eggNOG" id="COG0292">
    <property type="taxonomic scope" value="Bacteria"/>
</dbReference>
<dbReference type="HOGENOM" id="CLU_123265_0_1_9"/>
<dbReference type="OrthoDB" id="9808966at2"/>
<dbReference type="GO" id="GO:1990904">
    <property type="term" value="C:ribonucleoprotein complex"/>
    <property type="evidence" value="ECO:0007669"/>
    <property type="project" value="UniProtKB-KW"/>
</dbReference>
<dbReference type="GO" id="GO:0005840">
    <property type="term" value="C:ribosome"/>
    <property type="evidence" value="ECO:0007669"/>
    <property type="project" value="UniProtKB-KW"/>
</dbReference>
<dbReference type="GO" id="GO:0019843">
    <property type="term" value="F:rRNA binding"/>
    <property type="evidence" value="ECO:0007669"/>
    <property type="project" value="UniProtKB-UniRule"/>
</dbReference>
<dbReference type="GO" id="GO:0003735">
    <property type="term" value="F:structural constituent of ribosome"/>
    <property type="evidence" value="ECO:0007669"/>
    <property type="project" value="InterPro"/>
</dbReference>
<dbReference type="GO" id="GO:0000027">
    <property type="term" value="P:ribosomal large subunit assembly"/>
    <property type="evidence" value="ECO:0007669"/>
    <property type="project" value="UniProtKB-UniRule"/>
</dbReference>
<dbReference type="GO" id="GO:0006412">
    <property type="term" value="P:translation"/>
    <property type="evidence" value="ECO:0007669"/>
    <property type="project" value="InterPro"/>
</dbReference>
<dbReference type="CDD" id="cd07026">
    <property type="entry name" value="Ribosomal_L20"/>
    <property type="match status" value="1"/>
</dbReference>
<dbReference type="FunFam" id="1.10.1900.20:FF:000001">
    <property type="entry name" value="50S ribosomal protein L20"/>
    <property type="match status" value="1"/>
</dbReference>
<dbReference type="Gene3D" id="6.10.160.10">
    <property type="match status" value="1"/>
</dbReference>
<dbReference type="Gene3D" id="1.10.1900.20">
    <property type="entry name" value="Ribosomal protein L20"/>
    <property type="match status" value="1"/>
</dbReference>
<dbReference type="HAMAP" id="MF_00382">
    <property type="entry name" value="Ribosomal_bL20"/>
    <property type="match status" value="1"/>
</dbReference>
<dbReference type="InterPro" id="IPR005813">
    <property type="entry name" value="Ribosomal_bL20"/>
</dbReference>
<dbReference type="InterPro" id="IPR049946">
    <property type="entry name" value="RIBOSOMAL_L20_CS"/>
</dbReference>
<dbReference type="InterPro" id="IPR035566">
    <property type="entry name" value="Ribosomal_protein_bL20_C"/>
</dbReference>
<dbReference type="NCBIfam" id="TIGR01032">
    <property type="entry name" value="rplT_bact"/>
    <property type="match status" value="1"/>
</dbReference>
<dbReference type="PANTHER" id="PTHR10986">
    <property type="entry name" value="39S RIBOSOMAL PROTEIN L20"/>
    <property type="match status" value="1"/>
</dbReference>
<dbReference type="Pfam" id="PF00453">
    <property type="entry name" value="Ribosomal_L20"/>
    <property type="match status" value="1"/>
</dbReference>
<dbReference type="PRINTS" id="PR00062">
    <property type="entry name" value="RIBOSOMALL20"/>
</dbReference>
<dbReference type="SUPFAM" id="SSF74731">
    <property type="entry name" value="Ribosomal protein L20"/>
    <property type="match status" value="1"/>
</dbReference>
<dbReference type="PROSITE" id="PS00937">
    <property type="entry name" value="RIBOSOMAL_L20"/>
    <property type="match status" value="1"/>
</dbReference>
<feature type="chain" id="PRO_1000205715" description="Large ribosomal subunit protein bL20">
    <location>
        <begin position="1"/>
        <end position="119"/>
    </location>
</feature>
<protein>
    <recommendedName>
        <fullName evidence="1">Large ribosomal subunit protein bL20</fullName>
    </recommendedName>
    <alternativeName>
        <fullName evidence="2">50S ribosomal protein L20</fullName>
    </alternativeName>
</protein>
<proteinExistence type="inferred from homology"/>
<reference key="1">
    <citation type="submission" date="2009-06" db="EMBL/GenBank/DDBJ databases">
        <title>Complete sequence of chromosome of Geopacillus sp. WCH70.</title>
        <authorList>
            <consortium name="US DOE Joint Genome Institute"/>
            <person name="Lucas S."/>
            <person name="Copeland A."/>
            <person name="Lapidus A."/>
            <person name="Glavina del Rio T."/>
            <person name="Dalin E."/>
            <person name="Tice H."/>
            <person name="Bruce D."/>
            <person name="Goodwin L."/>
            <person name="Pitluck S."/>
            <person name="Chertkov O."/>
            <person name="Brettin T."/>
            <person name="Detter J.C."/>
            <person name="Han C."/>
            <person name="Larimer F."/>
            <person name="Land M."/>
            <person name="Hauser L."/>
            <person name="Kyrpides N."/>
            <person name="Mikhailova N."/>
            <person name="Brumm P."/>
            <person name="Mead D.A."/>
            <person name="Richardson P."/>
        </authorList>
    </citation>
    <scope>NUCLEOTIDE SEQUENCE [LARGE SCALE GENOMIC DNA]</scope>
    <source>
        <strain>WCH70</strain>
    </source>
</reference>
<gene>
    <name evidence="1" type="primary">rplT</name>
    <name type="ordered locus">GWCH70_2658</name>
</gene>
<sequence>MPRVKGGTVTRRRRKKVLKLAKGYFGAKHALYRVANQQVMKSLMYAYRDRRQRKRDFRKLWIARINAAARMHGLSYSRFMHGLKLAGVEVNRKMLADLAVNDQAAFAQLADLAKANLNK</sequence>
<organism>
    <name type="scientific">Geobacillus sp. (strain WCH70)</name>
    <dbReference type="NCBI Taxonomy" id="471223"/>
    <lineage>
        <taxon>Bacteria</taxon>
        <taxon>Bacillati</taxon>
        <taxon>Bacillota</taxon>
        <taxon>Bacilli</taxon>
        <taxon>Bacillales</taxon>
        <taxon>Anoxybacillaceae</taxon>
        <taxon>Geobacillus</taxon>
    </lineage>
</organism>
<keyword id="KW-0687">Ribonucleoprotein</keyword>
<keyword id="KW-0689">Ribosomal protein</keyword>
<keyword id="KW-0694">RNA-binding</keyword>
<keyword id="KW-0699">rRNA-binding</keyword>
<evidence type="ECO:0000255" key="1">
    <source>
        <dbReference type="HAMAP-Rule" id="MF_00382"/>
    </source>
</evidence>
<evidence type="ECO:0000305" key="2"/>
<comment type="function">
    <text evidence="1">Binds directly to 23S ribosomal RNA and is necessary for the in vitro assembly process of the 50S ribosomal subunit. It is not involved in the protein synthesizing functions of that subunit.</text>
</comment>
<comment type="similarity">
    <text evidence="1">Belongs to the bacterial ribosomal protein bL20 family.</text>
</comment>